<evidence type="ECO:0000255" key="1">
    <source>
        <dbReference type="HAMAP-Rule" id="MF_00184"/>
    </source>
</evidence>
<evidence type="ECO:0000255" key="2">
    <source>
        <dbReference type="PROSITE-ProRule" id="PRU01228"/>
    </source>
</evidence>
<comment type="function">
    <text evidence="1">Catalyzes the attachment of threonine to tRNA(Thr) in a two-step reaction: L-threonine is first activated by ATP to form Thr-AMP and then transferred to the acceptor end of tRNA(Thr). Also edits incorrectly charged L-seryl-tRNA(Thr).</text>
</comment>
<comment type="catalytic activity">
    <reaction evidence="1">
        <text>tRNA(Thr) + L-threonine + ATP = L-threonyl-tRNA(Thr) + AMP + diphosphate + H(+)</text>
        <dbReference type="Rhea" id="RHEA:24624"/>
        <dbReference type="Rhea" id="RHEA-COMP:9670"/>
        <dbReference type="Rhea" id="RHEA-COMP:9704"/>
        <dbReference type="ChEBI" id="CHEBI:15378"/>
        <dbReference type="ChEBI" id="CHEBI:30616"/>
        <dbReference type="ChEBI" id="CHEBI:33019"/>
        <dbReference type="ChEBI" id="CHEBI:57926"/>
        <dbReference type="ChEBI" id="CHEBI:78442"/>
        <dbReference type="ChEBI" id="CHEBI:78534"/>
        <dbReference type="ChEBI" id="CHEBI:456215"/>
        <dbReference type="EC" id="6.1.1.3"/>
    </reaction>
</comment>
<comment type="cofactor">
    <cofactor evidence="1">
        <name>Zn(2+)</name>
        <dbReference type="ChEBI" id="CHEBI:29105"/>
    </cofactor>
    <text evidence="1">Binds 1 zinc ion per subunit.</text>
</comment>
<comment type="subunit">
    <text evidence="1">Homodimer.</text>
</comment>
<comment type="subcellular location">
    <subcellularLocation>
        <location evidence="1">Cytoplasm</location>
    </subcellularLocation>
</comment>
<comment type="similarity">
    <text evidence="1">Belongs to the class-II aminoacyl-tRNA synthetase family.</text>
</comment>
<keyword id="KW-0030">Aminoacyl-tRNA synthetase</keyword>
<keyword id="KW-0067">ATP-binding</keyword>
<keyword id="KW-0963">Cytoplasm</keyword>
<keyword id="KW-0436">Ligase</keyword>
<keyword id="KW-0479">Metal-binding</keyword>
<keyword id="KW-0547">Nucleotide-binding</keyword>
<keyword id="KW-0648">Protein biosynthesis</keyword>
<keyword id="KW-0694">RNA-binding</keyword>
<keyword id="KW-0820">tRNA-binding</keyword>
<keyword id="KW-0862">Zinc</keyword>
<feature type="chain" id="PRO_1000098556" description="Threonine--tRNA ligase">
    <location>
        <begin position="1"/>
        <end position="659"/>
    </location>
</feature>
<feature type="domain" description="TGS" evidence="2">
    <location>
        <begin position="7"/>
        <end position="70"/>
    </location>
</feature>
<feature type="region of interest" description="Catalytic" evidence="1">
    <location>
        <begin position="255"/>
        <end position="557"/>
    </location>
</feature>
<feature type="binding site" evidence="1">
    <location>
        <position position="353"/>
    </location>
    <ligand>
        <name>Zn(2+)</name>
        <dbReference type="ChEBI" id="CHEBI:29105"/>
    </ligand>
</feature>
<feature type="binding site" evidence="1">
    <location>
        <position position="404"/>
    </location>
    <ligand>
        <name>Zn(2+)</name>
        <dbReference type="ChEBI" id="CHEBI:29105"/>
    </ligand>
</feature>
<feature type="binding site" evidence="1">
    <location>
        <position position="534"/>
    </location>
    <ligand>
        <name>Zn(2+)</name>
        <dbReference type="ChEBI" id="CHEBI:29105"/>
    </ligand>
</feature>
<reference key="1">
    <citation type="submission" date="2008-06" db="EMBL/GenBank/DDBJ databases">
        <title>Complete sequence of Chlorobium phaeobacteroides BS1.</title>
        <authorList>
            <consortium name="US DOE Joint Genome Institute"/>
            <person name="Lucas S."/>
            <person name="Copeland A."/>
            <person name="Lapidus A."/>
            <person name="Glavina del Rio T."/>
            <person name="Dalin E."/>
            <person name="Tice H."/>
            <person name="Bruce D."/>
            <person name="Goodwin L."/>
            <person name="Pitluck S."/>
            <person name="Schmutz J."/>
            <person name="Larimer F."/>
            <person name="Land M."/>
            <person name="Hauser L."/>
            <person name="Kyrpides N."/>
            <person name="Ovchinnikova G."/>
            <person name="Li T."/>
            <person name="Liu Z."/>
            <person name="Zhao F."/>
            <person name="Overmann J."/>
            <person name="Bryant D.A."/>
            <person name="Richardson P."/>
        </authorList>
    </citation>
    <scope>NUCLEOTIDE SEQUENCE [LARGE SCALE GENOMIC DNA]</scope>
    <source>
        <strain>BS1</strain>
    </source>
</reference>
<organism>
    <name type="scientific">Chlorobium phaeobacteroides (strain BS1)</name>
    <dbReference type="NCBI Taxonomy" id="331678"/>
    <lineage>
        <taxon>Bacteria</taxon>
        <taxon>Pseudomonadati</taxon>
        <taxon>Chlorobiota</taxon>
        <taxon>Chlorobiia</taxon>
        <taxon>Chlorobiales</taxon>
        <taxon>Chlorobiaceae</taxon>
        <taxon>Chlorobium/Pelodictyon group</taxon>
        <taxon>Chlorobium</taxon>
    </lineage>
</organism>
<name>SYT_CHLPB</name>
<proteinExistence type="inferred from homology"/>
<sequence>MSENIDVQATVTVTFPDGRNMSIPSGSSGYDIAQSIGHSLAREALAIRINGELADLGTAVTDDATVEIITFDHPGATGKHIFWHSASHIMAQAIEELFPGTKFGAGPAVEQGFYYDIASEHRFNEEDLQKIEQQMLDISKRSIDIRREEMPREKAIAFFSESRKDPYKVEILQDTLKEADSVSIYHQGAFADLCSGPHLPNTSKLKAVKLTNISASFWRGDSSRESMQRIYGIAFPSAKLLKQHLARLEEAKKRDHRKLGAELELFMLSQDVGSGLPIWLPKGAIIRSELEAFLKEEQRKRGYVPVYTPHIGNIDLYKRSGHYPYYSDSQFPPLTYKDDLGREEQYLLKPMNCPHHHLIYSSQLRSYRDLPIRMAEFGTVYRHEQSGELNGLIRARGFTQDDSHIYCRPDQLVDEICAAIDLTKFVFTTLGFDDIEVRLSLHDPENQGKYGGTEEVWKQAEKDVREAADRMEINYVIGIGEASFYGPKIDFIVRDALGRKWQLGTVQVDYVMPERFDLSYIGSDGKPHRPVIIHRAPFGSMERFIGVLIEHTAGNFPLWLAPVQVAVLPITEEVHAYAERVHQMLIDNGIRADLDIRSEKIGKKIREAEVGKIPYMVIIGQKEADSEEISLRRHRKGDQGSLTLQALKDMLVKEVRNKS</sequence>
<dbReference type="EC" id="6.1.1.3" evidence="1"/>
<dbReference type="EMBL" id="CP001101">
    <property type="protein sequence ID" value="ACE03147.1"/>
    <property type="molecule type" value="Genomic_DNA"/>
</dbReference>
<dbReference type="SMR" id="B3EKG9"/>
<dbReference type="STRING" id="331678.Cphamn1_0172"/>
<dbReference type="KEGG" id="cpb:Cphamn1_0172"/>
<dbReference type="eggNOG" id="COG0441">
    <property type="taxonomic scope" value="Bacteria"/>
</dbReference>
<dbReference type="HOGENOM" id="CLU_008554_0_1_10"/>
<dbReference type="OrthoDB" id="9802304at2"/>
<dbReference type="GO" id="GO:0005737">
    <property type="term" value="C:cytoplasm"/>
    <property type="evidence" value="ECO:0007669"/>
    <property type="project" value="UniProtKB-SubCell"/>
</dbReference>
<dbReference type="GO" id="GO:0005524">
    <property type="term" value="F:ATP binding"/>
    <property type="evidence" value="ECO:0007669"/>
    <property type="project" value="UniProtKB-UniRule"/>
</dbReference>
<dbReference type="GO" id="GO:0046872">
    <property type="term" value="F:metal ion binding"/>
    <property type="evidence" value="ECO:0007669"/>
    <property type="project" value="UniProtKB-KW"/>
</dbReference>
<dbReference type="GO" id="GO:0004829">
    <property type="term" value="F:threonine-tRNA ligase activity"/>
    <property type="evidence" value="ECO:0007669"/>
    <property type="project" value="UniProtKB-UniRule"/>
</dbReference>
<dbReference type="GO" id="GO:0000049">
    <property type="term" value="F:tRNA binding"/>
    <property type="evidence" value="ECO:0007669"/>
    <property type="project" value="UniProtKB-KW"/>
</dbReference>
<dbReference type="GO" id="GO:0006435">
    <property type="term" value="P:threonyl-tRNA aminoacylation"/>
    <property type="evidence" value="ECO:0007669"/>
    <property type="project" value="UniProtKB-UniRule"/>
</dbReference>
<dbReference type="CDD" id="cd01667">
    <property type="entry name" value="TGS_ThrRS"/>
    <property type="match status" value="1"/>
</dbReference>
<dbReference type="CDD" id="cd00860">
    <property type="entry name" value="ThrRS_anticodon"/>
    <property type="match status" value="1"/>
</dbReference>
<dbReference type="CDD" id="cd00771">
    <property type="entry name" value="ThrRS_core"/>
    <property type="match status" value="1"/>
</dbReference>
<dbReference type="FunFam" id="3.30.930.10:FF:000002">
    <property type="entry name" value="Threonine--tRNA ligase"/>
    <property type="match status" value="1"/>
</dbReference>
<dbReference type="FunFam" id="3.40.50.800:FF:000001">
    <property type="entry name" value="Threonine--tRNA ligase"/>
    <property type="match status" value="1"/>
</dbReference>
<dbReference type="FunFam" id="3.30.980.10:FF:000005">
    <property type="entry name" value="Threonyl-tRNA synthetase, mitochondrial"/>
    <property type="match status" value="1"/>
</dbReference>
<dbReference type="Gene3D" id="3.10.20.30">
    <property type="match status" value="1"/>
</dbReference>
<dbReference type="Gene3D" id="3.30.54.20">
    <property type="match status" value="1"/>
</dbReference>
<dbReference type="Gene3D" id="3.40.50.800">
    <property type="entry name" value="Anticodon-binding domain"/>
    <property type="match status" value="1"/>
</dbReference>
<dbReference type="Gene3D" id="3.30.930.10">
    <property type="entry name" value="Bira Bifunctional Protein, Domain 2"/>
    <property type="match status" value="1"/>
</dbReference>
<dbReference type="Gene3D" id="3.30.980.10">
    <property type="entry name" value="Threonyl-trna Synthetase, Chain A, domain 2"/>
    <property type="match status" value="1"/>
</dbReference>
<dbReference type="HAMAP" id="MF_00184">
    <property type="entry name" value="Thr_tRNA_synth"/>
    <property type="match status" value="1"/>
</dbReference>
<dbReference type="InterPro" id="IPR002314">
    <property type="entry name" value="aa-tRNA-synt_IIb"/>
</dbReference>
<dbReference type="InterPro" id="IPR006195">
    <property type="entry name" value="aa-tRNA-synth_II"/>
</dbReference>
<dbReference type="InterPro" id="IPR045864">
    <property type="entry name" value="aa-tRNA-synth_II/BPL/LPL"/>
</dbReference>
<dbReference type="InterPro" id="IPR004154">
    <property type="entry name" value="Anticodon-bd"/>
</dbReference>
<dbReference type="InterPro" id="IPR036621">
    <property type="entry name" value="Anticodon-bd_dom_sf"/>
</dbReference>
<dbReference type="InterPro" id="IPR012675">
    <property type="entry name" value="Beta-grasp_dom_sf"/>
</dbReference>
<dbReference type="InterPro" id="IPR004095">
    <property type="entry name" value="TGS"/>
</dbReference>
<dbReference type="InterPro" id="IPR012676">
    <property type="entry name" value="TGS-like"/>
</dbReference>
<dbReference type="InterPro" id="IPR002320">
    <property type="entry name" value="Thr-tRNA-ligase_IIa"/>
</dbReference>
<dbReference type="InterPro" id="IPR018163">
    <property type="entry name" value="Thr/Ala-tRNA-synth_IIc_edit"/>
</dbReference>
<dbReference type="InterPro" id="IPR047246">
    <property type="entry name" value="ThrRS_anticodon"/>
</dbReference>
<dbReference type="InterPro" id="IPR033728">
    <property type="entry name" value="ThrRS_core"/>
</dbReference>
<dbReference type="InterPro" id="IPR012947">
    <property type="entry name" value="tRNA_SAD"/>
</dbReference>
<dbReference type="NCBIfam" id="TIGR00418">
    <property type="entry name" value="thrS"/>
    <property type="match status" value="1"/>
</dbReference>
<dbReference type="PANTHER" id="PTHR11451:SF44">
    <property type="entry name" value="THREONINE--TRNA LIGASE, CHLOROPLASTIC_MITOCHONDRIAL 2"/>
    <property type="match status" value="1"/>
</dbReference>
<dbReference type="PANTHER" id="PTHR11451">
    <property type="entry name" value="THREONINE-TRNA LIGASE"/>
    <property type="match status" value="1"/>
</dbReference>
<dbReference type="Pfam" id="PF03129">
    <property type="entry name" value="HGTP_anticodon"/>
    <property type="match status" value="1"/>
</dbReference>
<dbReference type="Pfam" id="PF02824">
    <property type="entry name" value="TGS"/>
    <property type="match status" value="1"/>
</dbReference>
<dbReference type="Pfam" id="PF00587">
    <property type="entry name" value="tRNA-synt_2b"/>
    <property type="match status" value="1"/>
</dbReference>
<dbReference type="Pfam" id="PF07973">
    <property type="entry name" value="tRNA_SAD"/>
    <property type="match status" value="1"/>
</dbReference>
<dbReference type="PRINTS" id="PR01047">
    <property type="entry name" value="TRNASYNTHTHR"/>
</dbReference>
<dbReference type="SMART" id="SM00863">
    <property type="entry name" value="tRNA_SAD"/>
    <property type="match status" value="1"/>
</dbReference>
<dbReference type="SUPFAM" id="SSF52954">
    <property type="entry name" value="Class II aaRS ABD-related"/>
    <property type="match status" value="1"/>
</dbReference>
<dbReference type="SUPFAM" id="SSF55681">
    <property type="entry name" value="Class II aaRS and biotin synthetases"/>
    <property type="match status" value="1"/>
</dbReference>
<dbReference type="SUPFAM" id="SSF81271">
    <property type="entry name" value="TGS-like"/>
    <property type="match status" value="1"/>
</dbReference>
<dbReference type="SUPFAM" id="SSF55186">
    <property type="entry name" value="ThrRS/AlaRS common domain"/>
    <property type="match status" value="1"/>
</dbReference>
<dbReference type="PROSITE" id="PS50862">
    <property type="entry name" value="AA_TRNA_LIGASE_II"/>
    <property type="match status" value="1"/>
</dbReference>
<dbReference type="PROSITE" id="PS51880">
    <property type="entry name" value="TGS"/>
    <property type="match status" value="1"/>
</dbReference>
<protein>
    <recommendedName>
        <fullName evidence="1">Threonine--tRNA ligase</fullName>
        <ecNumber evidence="1">6.1.1.3</ecNumber>
    </recommendedName>
    <alternativeName>
        <fullName evidence="1">Threonyl-tRNA synthetase</fullName>
        <shortName evidence="1">ThrRS</shortName>
    </alternativeName>
</protein>
<accession>B3EKG9</accession>
<gene>
    <name evidence="1" type="primary">thrS</name>
    <name type="ordered locus">Cphamn1_0172</name>
</gene>